<proteinExistence type="inferred from homology"/>
<gene>
    <name type="primary">acnA</name>
    <name type="synonym">citB</name>
    <name type="ordered locus">SERP0921</name>
</gene>
<sequence>MASNIKEQAKKQFELNGQSYTYYDLQTLEEKGLAKISKLPYSIRVLLESVLRQEDDFVITDDHIKALSKFGNAGNEGEVPFKPSRVILQDFTGVPAVVDLASLRKAMNDVGGDINKINPEVPVDLVIDHSVQVDSYANPEALERNMKLEFERNYERYQFLNWATKAFDNYNAVPPATGIVHQVNLEYLANVVHVRDVDGEKTAFPDTLVGTDSHTTMINGIGVLGWGVGGIEAEAGMLGQPSYFPIPEVIGVRLTHSLPQGSTATDLALRVTEELRKKGVVGKFVEFFGPGVQHLPLADRATIANMAPEYGATCGFFPVDEESLKYMKLTGRDEEHIELVKEYLQQNHMFFDVEKEDPEYTDVIDLDLSTVEASLSGPKRPQDLIFLSDMKKEFEKSVTAPAGNQGHGLDQSEFDKKAEINFNDGSKATMKTGDIAIAAITSCTNTSNPYVMLGAGLVAKKAVEKGLKVPEFVKTSLAPGSKVVTGYLRDSGLQQYLDDLGFNLVGYGCTTCIGNSGPLLPEIEKAVADEDLLVTSVLSGNRNFEGRIHPLVKANYLASPQLVVAYALAGTVDIDLQNEPIGKGKDGKDVYLQDIWPSIQEVSDTVDKVVTPELFLEEYKNVYHNNEMWNEIDVTDEPLYDFDPNSTYIQNPTFFQGLSKEPGKIEPLKSLRVMGKFGDSVTTDHISPAGAIGKDTPAGKYLLDHDVAIRNFNSYGSRRGNHEVMVRGTFANIRIKNQLAPGTEGGFTTYWPTGEIMPIYDAAMKYKEDGTGLVVLAGNDYGMGSSRDWAAKGTNLLGVKTVIAQSYERIHRSNLVMMGVLPLQFQQGESAEALGLDGKEEISVDINEDVQPHDFVNVTAKKENGEIINFKAIVRFDSLVELDYYRHGGILQMVLRNKLAQ</sequence>
<keyword id="KW-0408">Iron</keyword>
<keyword id="KW-0411">Iron-sulfur</keyword>
<keyword id="KW-0456">Lyase</keyword>
<keyword id="KW-0479">Metal-binding</keyword>
<keyword id="KW-1185">Reference proteome</keyword>
<keyword id="KW-0694">RNA-binding</keyword>
<keyword id="KW-0816">Tricarboxylic acid cycle</keyword>
<dbReference type="EC" id="4.2.1.3" evidence="3"/>
<dbReference type="EC" id="4.2.1.99" evidence="3"/>
<dbReference type="EMBL" id="CP000029">
    <property type="protein sequence ID" value="AAW54303.1"/>
    <property type="molecule type" value="Genomic_DNA"/>
</dbReference>
<dbReference type="RefSeq" id="WP_002489546.1">
    <property type="nucleotide sequence ID" value="NC_002976.3"/>
</dbReference>
<dbReference type="SMR" id="Q5HPJ0"/>
<dbReference type="STRING" id="176279.SERP0921"/>
<dbReference type="KEGG" id="ser:SERP0921"/>
<dbReference type="eggNOG" id="COG1048">
    <property type="taxonomic scope" value="Bacteria"/>
</dbReference>
<dbReference type="HOGENOM" id="CLU_013476_2_1_9"/>
<dbReference type="UniPathway" id="UPA00223">
    <property type="reaction ID" value="UER00718"/>
</dbReference>
<dbReference type="UniPathway" id="UPA00946"/>
<dbReference type="Proteomes" id="UP000000531">
    <property type="component" value="Chromosome"/>
</dbReference>
<dbReference type="GO" id="GO:0047456">
    <property type="term" value="F:2-methylisocitrate dehydratase activity"/>
    <property type="evidence" value="ECO:0000250"/>
    <property type="project" value="UniProtKB"/>
</dbReference>
<dbReference type="GO" id="GO:0051539">
    <property type="term" value="F:4 iron, 4 sulfur cluster binding"/>
    <property type="evidence" value="ECO:0000250"/>
    <property type="project" value="UniProtKB"/>
</dbReference>
<dbReference type="GO" id="GO:0003994">
    <property type="term" value="F:aconitate hydratase activity"/>
    <property type="evidence" value="ECO:0000250"/>
    <property type="project" value="UniProtKB"/>
</dbReference>
<dbReference type="GO" id="GO:0046872">
    <property type="term" value="F:metal ion binding"/>
    <property type="evidence" value="ECO:0007669"/>
    <property type="project" value="UniProtKB-KW"/>
</dbReference>
<dbReference type="GO" id="GO:0003730">
    <property type="term" value="F:mRNA 3'-UTR binding"/>
    <property type="evidence" value="ECO:0000250"/>
    <property type="project" value="UniProtKB"/>
</dbReference>
<dbReference type="GO" id="GO:0003729">
    <property type="term" value="F:mRNA binding"/>
    <property type="evidence" value="ECO:0000250"/>
    <property type="project" value="UniProtKB"/>
</dbReference>
<dbReference type="GO" id="GO:0019679">
    <property type="term" value="P:propionate metabolic process, methylcitrate cycle"/>
    <property type="evidence" value="ECO:0000250"/>
    <property type="project" value="UniProtKB"/>
</dbReference>
<dbReference type="GO" id="GO:0006099">
    <property type="term" value="P:tricarboxylic acid cycle"/>
    <property type="evidence" value="ECO:0000250"/>
    <property type="project" value="UniProtKB"/>
</dbReference>
<dbReference type="CDD" id="cd01586">
    <property type="entry name" value="AcnA_IRP"/>
    <property type="match status" value="1"/>
</dbReference>
<dbReference type="CDD" id="cd01580">
    <property type="entry name" value="AcnA_IRP_Swivel"/>
    <property type="match status" value="1"/>
</dbReference>
<dbReference type="FunFam" id="3.20.19.10:FF:000001">
    <property type="entry name" value="Aconitate hydratase"/>
    <property type="match status" value="1"/>
</dbReference>
<dbReference type="FunFam" id="3.30.499.10:FF:000002">
    <property type="entry name" value="Aconitate hydratase"/>
    <property type="match status" value="1"/>
</dbReference>
<dbReference type="FunFam" id="3.30.499.10:FF:000005">
    <property type="entry name" value="cytoplasmic aconitate hydratase"/>
    <property type="match status" value="1"/>
</dbReference>
<dbReference type="Gene3D" id="6.10.190.10">
    <property type="match status" value="1"/>
</dbReference>
<dbReference type="Gene3D" id="3.30.499.10">
    <property type="entry name" value="Aconitase, domain 3"/>
    <property type="match status" value="2"/>
</dbReference>
<dbReference type="Gene3D" id="3.20.19.10">
    <property type="entry name" value="Aconitase, domain 4"/>
    <property type="match status" value="1"/>
</dbReference>
<dbReference type="InterPro" id="IPR044137">
    <property type="entry name" value="AcnA_IRP_Swivel"/>
</dbReference>
<dbReference type="InterPro" id="IPR015931">
    <property type="entry name" value="Acnase/IPM_dHydase_lsu_aba_1/3"/>
</dbReference>
<dbReference type="InterPro" id="IPR001030">
    <property type="entry name" value="Acoase/IPM_deHydtase_lsu_aba"/>
</dbReference>
<dbReference type="InterPro" id="IPR015928">
    <property type="entry name" value="Aconitase/3IPM_dehydase_swvl"/>
</dbReference>
<dbReference type="InterPro" id="IPR006249">
    <property type="entry name" value="Aconitase/IRP2"/>
</dbReference>
<dbReference type="InterPro" id="IPR018136">
    <property type="entry name" value="Aconitase_4Fe-4S_BS"/>
</dbReference>
<dbReference type="InterPro" id="IPR036008">
    <property type="entry name" value="Aconitase_4Fe-4S_dom"/>
</dbReference>
<dbReference type="InterPro" id="IPR000573">
    <property type="entry name" value="AconitaseA/IPMdHydase_ssu_swvl"/>
</dbReference>
<dbReference type="NCBIfam" id="TIGR01341">
    <property type="entry name" value="aconitase_1"/>
    <property type="match status" value="1"/>
</dbReference>
<dbReference type="NCBIfam" id="NF006757">
    <property type="entry name" value="PRK09277.1"/>
    <property type="match status" value="1"/>
</dbReference>
<dbReference type="NCBIfam" id="NF009520">
    <property type="entry name" value="PRK12881.1"/>
    <property type="match status" value="1"/>
</dbReference>
<dbReference type="PANTHER" id="PTHR11670">
    <property type="entry name" value="ACONITASE/IRON-RESPONSIVE ELEMENT FAMILY MEMBER"/>
    <property type="match status" value="1"/>
</dbReference>
<dbReference type="Pfam" id="PF00330">
    <property type="entry name" value="Aconitase"/>
    <property type="match status" value="1"/>
</dbReference>
<dbReference type="Pfam" id="PF00694">
    <property type="entry name" value="Aconitase_C"/>
    <property type="match status" value="1"/>
</dbReference>
<dbReference type="PRINTS" id="PR00415">
    <property type="entry name" value="ACONITASE"/>
</dbReference>
<dbReference type="SUPFAM" id="SSF53732">
    <property type="entry name" value="Aconitase iron-sulfur domain"/>
    <property type="match status" value="1"/>
</dbReference>
<dbReference type="SUPFAM" id="SSF52016">
    <property type="entry name" value="LeuD/IlvD-like"/>
    <property type="match status" value="1"/>
</dbReference>
<dbReference type="PROSITE" id="PS00450">
    <property type="entry name" value="ACONITASE_1"/>
    <property type="match status" value="1"/>
</dbReference>
<dbReference type="PROSITE" id="PS01244">
    <property type="entry name" value="ACONITASE_2"/>
    <property type="match status" value="1"/>
</dbReference>
<comment type="function">
    <text evidence="1 3">Involved in the catabolism of short chain fatty acids (SCFA) via the tricarboxylic acid (TCA)(acetyl degradation route) and probably the 2-methylcitrate cycle I (propionate degradation route). Catalyzes the reversible isomerization of citrate to isocitrate via cis-aconitate. Could catalyze the hydration of 2-methyl-cis-aconitate to yield (2R,3S)-2-methylisocitrate. The apo form of AcnA functions as a RNA-binding regulatory protein.</text>
</comment>
<comment type="catalytic activity">
    <reaction evidence="3">
        <text>citrate = D-threo-isocitrate</text>
        <dbReference type="Rhea" id="RHEA:10336"/>
        <dbReference type="ChEBI" id="CHEBI:15562"/>
        <dbReference type="ChEBI" id="CHEBI:16947"/>
        <dbReference type="EC" id="4.2.1.3"/>
    </reaction>
</comment>
<comment type="catalytic activity">
    <reaction evidence="3">
        <text>(2S,3R)-3-hydroxybutane-1,2,3-tricarboxylate = 2-methyl-cis-aconitate + H2O</text>
        <dbReference type="Rhea" id="RHEA:17941"/>
        <dbReference type="ChEBI" id="CHEBI:15377"/>
        <dbReference type="ChEBI" id="CHEBI:57429"/>
        <dbReference type="ChEBI" id="CHEBI:57872"/>
        <dbReference type="EC" id="4.2.1.99"/>
    </reaction>
</comment>
<comment type="cofactor">
    <cofactor evidence="1">
        <name>[4Fe-4S] cluster</name>
        <dbReference type="ChEBI" id="CHEBI:49883"/>
    </cofactor>
    <text evidence="1">Binds 1 [4Fe-4S] cluster per subunit.</text>
</comment>
<comment type="pathway">
    <text evidence="3">Carbohydrate metabolism; tricarboxylic acid cycle; isocitrate from oxaloacetate: step 2/2.</text>
</comment>
<comment type="pathway">
    <text evidence="3">Organic acid metabolism; propanoate degradation.</text>
</comment>
<comment type="subunit">
    <text evidence="1">Monomer.</text>
</comment>
<comment type="similarity">
    <text evidence="4">Belongs to the aconitase/IPM isomerase family.</text>
</comment>
<evidence type="ECO:0000250" key="1">
    <source>
        <dbReference type="UniProtKB" id="P09339"/>
    </source>
</evidence>
<evidence type="ECO:0000250" key="2">
    <source>
        <dbReference type="UniProtKB" id="P36683"/>
    </source>
</evidence>
<evidence type="ECO:0000250" key="3">
    <source>
        <dbReference type="UniProtKB" id="Q8ZP52"/>
    </source>
</evidence>
<evidence type="ECO:0000305" key="4"/>
<feature type="chain" id="PRO_0000076673" description="Aconitate hydratase A">
    <location>
        <begin position="1"/>
        <end position="901"/>
    </location>
</feature>
<feature type="binding site" evidence="2">
    <location>
        <position position="443"/>
    </location>
    <ligand>
        <name>[4Fe-4S] cluster</name>
        <dbReference type="ChEBI" id="CHEBI:49883"/>
    </ligand>
</feature>
<feature type="binding site" evidence="2">
    <location>
        <position position="509"/>
    </location>
    <ligand>
        <name>[4Fe-4S] cluster</name>
        <dbReference type="ChEBI" id="CHEBI:49883"/>
    </ligand>
</feature>
<feature type="binding site" evidence="2">
    <location>
        <position position="512"/>
    </location>
    <ligand>
        <name>[4Fe-4S] cluster</name>
        <dbReference type="ChEBI" id="CHEBI:49883"/>
    </ligand>
</feature>
<reference key="1">
    <citation type="journal article" date="2005" name="J. Bacteriol.">
        <title>Insights on evolution of virulence and resistance from the complete genome analysis of an early methicillin-resistant Staphylococcus aureus strain and a biofilm-producing methicillin-resistant Staphylococcus epidermidis strain.</title>
        <authorList>
            <person name="Gill S.R."/>
            <person name="Fouts D.E."/>
            <person name="Archer G.L."/>
            <person name="Mongodin E.F."/>
            <person name="DeBoy R.T."/>
            <person name="Ravel J."/>
            <person name="Paulsen I.T."/>
            <person name="Kolonay J.F."/>
            <person name="Brinkac L.M."/>
            <person name="Beanan M.J."/>
            <person name="Dodson R.J."/>
            <person name="Daugherty S.C."/>
            <person name="Madupu R."/>
            <person name="Angiuoli S.V."/>
            <person name="Durkin A.S."/>
            <person name="Haft D.H."/>
            <person name="Vamathevan J.J."/>
            <person name="Khouri H."/>
            <person name="Utterback T.R."/>
            <person name="Lee C."/>
            <person name="Dimitrov G."/>
            <person name="Jiang L."/>
            <person name="Qin H."/>
            <person name="Weidman J."/>
            <person name="Tran K."/>
            <person name="Kang K.H."/>
            <person name="Hance I.R."/>
            <person name="Nelson K.E."/>
            <person name="Fraser C.M."/>
        </authorList>
    </citation>
    <scope>NUCLEOTIDE SEQUENCE [LARGE SCALE GENOMIC DNA]</scope>
    <source>
        <strain>ATCC 35984 / DSM 28319 / BCRC 17069 / CCUG 31568 / BM 3577 / RP62A</strain>
    </source>
</reference>
<protein>
    <recommendedName>
        <fullName evidence="3">Aconitate hydratase A</fullName>
        <shortName evidence="3">ACN</shortName>
        <shortName evidence="3">Aconitase</shortName>
        <ecNumber evidence="3">4.2.1.3</ecNumber>
    </recommendedName>
    <alternativeName>
        <fullName evidence="3">(2R,3S)-2-methylisocitrate dehydratase</fullName>
    </alternativeName>
    <alternativeName>
        <fullName evidence="3">(2S,3R)-3-hydroxybutane-1,2,3-tricarboxylate dehydratase</fullName>
    </alternativeName>
    <alternativeName>
        <fullName evidence="1">Iron-responsive protein-like</fullName>
        <shortName evidence="1">IRP-like</shortName>
    </alternativeName>
    <alternativeName>
        <fullName evidence="3">Probable 2-methyl-cis-aconitate hydratase</fullName>
        <ecNumber evidence="3">4.2.1.99</ecNumber>
    </alternativeName>
    <alternativeName>
        <fullName evidence="1">RNA-binding protein</fullName>
    </alternativeName>
</protein>
<organism>
    <name type="scientific">Staphylococcus epidermidis (strain ATCC 35984 / DSM 28319 / BCRC 17069 / CCUG 31568 / BM 3577 / RP62A)</name>
    <dbReference type="NCBI Taxonomy" id="176279"/>
    <lineage>
        <taxon>Bacteria</taxon>
        <taxon>Bacillati</taxon>
        <taxon>Bacillota</taxon>
        <taxon>Bacilli</taxon>
        <taxon>Bacillales</taxon>
        <taxon>Staphylococcaceae</taxon>
        <taxon>Staphylococcus</taxon>
    </lineage>
</organism>
<name>ACNA_STAEQ</name>
<accession>Q5HPJ0</accession>